<feature type="chain" id="PRO_1000197912" description="Sec-independent protein translocase protein TatA">
    <location>
        <begin position="1"/>
        <end position="82"/>
    </location>
</feature>
<feature type="transmembrane region" description="Helical" evidence="1">
    <location>
        <begin position="1"/>
        <end position="21"/>
    </location>
</feature>
<feature type="region of interest" description="Disordered" evidence="2">
    <location>
        <begin position="46"/>
        <end position="82"/>
    </location>
</feature>
<evidence type="ECO:0000255" key="1">
    <source>
        <dbReference type="HAMAP-Rule" id="MF_00236"/>
    </source>
</evidence>
<evidence type="ECO:0000256" key="2">
    <source>
        <dbReference type="SAM" id="MobiDB-lite"/>
    </source>
</evidence>
<dbReference type="EMBL" id="CP001139">
    <property type="protein sequence ID" value="ACH65084.1"/>
    <property type="molecule type" value="Genomic_DNA"/>
</dbReference>
<dbReference type="RefSeq" id="WP_005416854.1">
    <property type="nucleotide sequence ID" value="NC_011184.1"/>
</dbReference>
<dbReference type="SMR" id="B5FF81"/>
<dbReference type="KEGG" id="vfm:VFMJ11_0048"/>
<dbReference type="HOGENOM" id="CLU_086034_5_1_6"/>
<dbReference type="Proteomes" id="UP000001857">
    <property type="component" value="Chromosome I"/>
</dbReference>
<dbReference type="GO" id="GO:0033281">
    <property type="term" value="C:TAT protein transport complex"/>
    <property type="evidence" value="ECO:0007669"/>
    <property type="project" value="UniProtKB-UniRule"/>
</dbReference>
<dbReference type="GO" id="GO:0008320">
    <property type="term" value="F:protein transmembrane transporter activity"/>
    <property type="evidence" value="ECO:0007669"/>
    <property type="project" value="UniProtKB-UniRule"/>
</dbReference>
<dbReference type="GO" id="GO:0043953">
    <property type="term" value="P:protein transport by the Tat complex"/>
    <property type="evidence" value="ECO:0007669"/>
    <property type="project" value="UniProtKB-UniRule"/>
</dbReference>
<dbReference type="Gene3D" id="1.20.5.3310">
    <property type="match status" value="1"/>
</dbReference>
<dbReference type="HAMAP" id="MF_00236">
    <property type="entry name" value="TatA_E"/>
    <property type="match status" value="1"/>
</dbReference>
<dbReference type="InterPro" id="IPR003369">
    <property type="entry name" value="TatA/B/E"/>
</dbReference>
<dbReference type="InterPro" id="IPR006312">
    <property type="entry name" value="TatA/E"/>
</dbReference>
<dbReference type="NCBIfam" id="NF002813">
    <property type="entry name" value="PRK02958.1"/>
    <property type="match status" value="1"/>
</dbReference>
<dbReference type="NCBIfam" id="NF003396">
    <property type="entry name" value="PRK04598.1"/>
    <property type="match status" value="1"/>
</dbReference>
<dbReference type="NCBIfam" id="TIGR01411">
    <property type="entry name" value="tatAE"/>
    <property type="match status" value="1"/>
</dbReference>
<dbReference type="PANTHER" id="PTHR42982">
    <property type="entry name" value="SEC-INDEPENDENT PROTEIN TRANSLOCASE PROTEIN TATA"/>
    <property type="match status" value="1"/>
</dbReference>
<dbReference type="PANTHER" id="PTHR42982:SF1">
    <property type="entry name" value="SEC-INDEPENDENT PROTEIN TRANSLOCASE PROTEIN TATA"/>
    <property type="match status" value="1"/>
</dbReference>
<dbReference type="Pfam" id="PF02416">
    <property type="entry name" value="TatA_B_E"/>
    <property type="match status" value="1"/>
</dbReference>
<reference key="1">
    <citation type="submission" date="2008-08" db="EMBL/GenBank/DDBJ databases">
        <title>Complete sequence of Vibrio fischeri strain MJ11.</title>
        <authorList>
            <person name="Mandel M.J."/>
            <person name="Stabb E.V."/>
            <person name="Ruby E.G."/>
            <person name="Ferriera S."/>
            <person name="Johnson J."/>
            <person name="Kravitz S."/>
            <person name="Beeson K."/>
            <person name="Sutton G."/>
            <person name="Rogers Y.-H."/>
            <person name="Friedman R."/>
            <person name="Frazier M."/>
            <person name="Venter J.C."/>
        </authorList>
    </citation>
    <scope>NUCLEOTIDE SEQUENCE [LARGE SCALE GENOMIC DNA]</scope>
    <source>
        <strain>MJ11</strain>
    </source>
</reference>
<name>TATA_ALIFM</name>
<sequence>MGGISIWQLLIIAVIIVLLFGTKKLRGVGSDLGSAVKGFKKAISEDEPAKDAKKDADFVPQNLEKKEAETVEKQKQNDKEQA</sequence>
<keyword id="KW-0997">Cell inner membrane</keyword>
<keyword id="KW-1003">Cell membrane</keyword>
<keyword id="KW-0472">Membrane</keyword>
<keyword id="KW-0653">Protein transport</keyword>
<keyword id="KW-0811">Translocation</keyword>
<keyword id="KW-0812">Transmembrane</keyword>
<keyword id="KW-1133">Transmembrane helix</keyword>
<keyword id="KW-0813">Transport</keyword>
<proteinExistence type="inferred from homology"/>
<protein>
    <recommendedName>
        <fullName evidence="1">Sec-independent protein translocase protein TatA</fullName>
    </recommendedName>
</protein>
<organism>
    <name type="scientific">Aliivibrio fischeri (strain MJ11)</name>
    <name type="common">Vibrio fischeri</name>
    <dbReference type="NCBI Taxonomy" id="388396"/>
    <lineage>
        <taxon>Bacteria</taxon>
        <taxon>Pseudomonadati</taxon>
        <taxon>Pseudomonadota</taxon>
        <taxon>Gammaproteobacteria</taxon>
        <taxon>Vibrionales</taxon>
        <taxon>Vibrionaceae</taxon>
        <taxon>Aliivibrio</taxon>
    </lineage>
</organism>
<accession>B5FF81</accession>
<comment type="function">
    <text evidence="1">Part of the twin-arginine translocation (Tat) system that transports large folded proteins containing a characteristic twin-arginine motif in their signal peptide across membranes. TatA could form the protein-conducting channel of the Tat system.</text>
</comment>
<comment type="subunit">
    <text evidence="1">The Tat system comprises two distinct complexes: a TatABC complex, containing multiple copies of TatA, TatB and TatC subunits, and a separate TatA complex, containing only TatA subunits. Substrates initially bind to the TatABC complex, which probably triggers association of the separate TatA complex to form the active translocon.</text>
</comment>
<comment type="subcellular location">
    <subcellularLocation>
        <location evidence="1">Cell inner membrane</location>
        <topology evidence="1">Single-pass membrane protein</topology>
    </subcellularLocation>
</comment>
<comment type="similarity">
    <text evidence="1">Belongs to the TatA/E family.</text>
</comment>
<gene>
    <name evidence="1" type="primary">tatA</name>
    <name type="ordered locus">VFMJ11_0048</name>
</gene>